<accession>A7ZW22</accession>
<proteinExistence type="inferred from homology"/>
<organism>
    <name type="scientific">Escherichia coli O9:H4 (strain HS)</name>
    <dbReference type="NCBI Taxonomy" id="331112"/>
    <lineage>
        <taxon>Bacteria</taxon>
        <taxon>Pseudomonadati</taxon>
        <taxon>Pseudomonadota</taxon>
        <taxon>Gammaproteobacteria</taxon>
        <taxon>Enterobacterales</taxon>
        <taxon>Enterobacteriaceae</taxon>
        <taxon>Escherichia</taxon>
    </lineage>
</organism>
<name>LEUD_ECOHS</name>
<protein>
    <recommendedName>
        <fullName evidence="1">3-isopropylmalate dehydratase small subunit</fullName>
        <ecNumber evidence="1">4.2.1.33</ecNumber>
    </recommendedName>
    <alternativeName>
        <fullName evidence="1">Alpha-IPM isomerase</fullName>
        <shortName evidence="1">IPMI</shortName>
    </alternativeName>
    <alternativeName>
        <fullName evidence="1">Isopropylmalate isomerase</fullName>
    </alternativeName>
</protein>
<reference key="1">
    <citation type="journal article" date="2008" name="J. Bacteriol.">
        <title>The pangenome structure of Escherichia coli: comparative genomic analysis of E. coli commensal and pathogenic isolates.</title>
        <authorList>
            <person name="Rasko D.A."/>
            <person name="Rosovitz M.J."/>
            <person name="Myers G.S.A."/>
            <person name="Mongodin E.F."/>
            <person name="Fricke W.F."/>
            <person name="Gajer P."/>
            <person name="Crabtree J."/>
            <person name="Sebaihia M."/>
            <person name="Thomson N.R."/>
            <person name="Chaudhuri R."/>
            <person name="Henderson I.R."/>
            <person name="Sperandio V."/>
            <person name="Ravel J."/>
        </authorList>
    </citation>
    <scope>NUCLEOTIDE SEQUENCE [LARGE SCALE GENOMIC DNA]</scope>
    <source>
        <strain>HS</strain>
    </source>
</reference>
<dbReference type="EC" id="4.2.1.33" evidence="1"/>
<dbReference type="EMBL" id="CP000802">
    <property type="protein sequence ID" value="ABV04476.1"/>
    <property type="molecule type" value="Genomic_DNA"/>
</dbReference>
<dbReference type="RefSeq" id="WP_000818222.1">
    <property type="nucleotide sequence ID" value="NC_009800.1"/>
</dbReference>
<dbReference type="SMR" id="A7ZW22"/>
<dbReference type="KEGG" id="ecx:EcHS_A0076"/>
<dbReference type="HOGENOM" id="CLU_081378_0_3_6"/>
<dbReference type="UniPathway" id="UPA00048">
    <property type="reaction ID" value="UER00071"/>
</dbReference>
<dbReference type="GO" id="GO:0009316">
    <property type="term" value="C:3-isopropylmalate dehydratase complex"/>
    <property type="evidence" value="ECO:0007669"/>
    <property type="project" value="InterPro"/>
</dbReference>
<dbReference type="GO" id="GO:0003861">
    <property type="term" value="F:3-isopropylmalate dehydratase activity"/>
    <property type="evidence" value="ECO:0007669"/>
    <property type="project" value="UniProtKB-UniRule"/>
</dbReference>
<dbReference type="GO" id="GO:0009098">
    <property type="term" value="P:L-leucine biosynthetic process"/>
    <property type="evidence" value="ECO:0007669"/>
    <property type="project" value="UniProtKB-UniRule"/>
</dbReference>
<dbReference type="CDD" id="cd01577">
    <property type="entry name" value="IPMI_Swivel"/>
    <property type="match status" value="1"/>
</dbReference>
<dbReference type="FunFam" id="3.20.19.10:FF:000003">
    <property type="entry name" value="3-isopropylmalate dehydratase small subunit"/>
    <property type="match status" value="1"/>
</dbReference>
<dbReference type="Gene3D" id="3.20.19.10">
    <property type="entry name" value="Aconitase, domain 4"/>
    <property type="match status" value="1"/>
</dbReference>
<dbReference type="HAMAP" id="MF_01031">
    <property type="entry name" value="LeuD_type1"/>
    <property type="match status" value="1"/>
</dbReference>
<dbReference type="InterPro" id="IPR004431">
    <property type="entry name" value="3-IsopropMal_deHydase_ssu"/>
</dbReference>
<dbReference type="InterPro" id="IPR015928">
    <property type="entry name" value="Aconitase/3IPM_dehydase_swvl"/>
</dbReference>
<dbReference type="InterPro" id="IPR000573">
    <property type="entry name" value="AconitaseA/IPMdHydase_ssu_swvl"/>
</dbReference>
<dbReference type="InterPro" id="IPR033940">
    <property type="entry name" value="IPMI_Swivel"/>
</dbReference>
<dbReference type="InterPro" id="IPR050075">
    <property type="entry name" value="LeuD"/>
</dbReference>
<dbReference type="NCBIfam" id="TIGR00171">
    <property type="entry name" value="leuD"/>
    <property type="match status" value="1"/>
</dbReference>
<dbReference type="NCBIfam" id="NF002458">
    <property type="entry name" value="PRK01641.1"/>
    <property type="match status" value="1"/>
</dbReference>
<dbReference type="PANTHER" id="PTHR43345:SF5">
    <property type="entry name" value="3-ISOPROPYLMALATE DEHYDRATASE SMALL SUBUNIT"/>
    <property type="match status" value="1"/>
</dbReference>
<dbReference type="PANTHER" id="PTHR43345">
    <property type="entry name" value="3-ISOPROPYLMALATE DEHYDRATASE SMALL SUBUNIT 2-RELATED-RELATED"/>
    <property type="match status" value="1"/>
</dbReference>
<dbReference type="Pfam" id="PF00694">
    <property type="entry name" value="Aconitase_C"/>
    <property type="match status" value="1"/>
</dbReference>
<dbReference type="SUPFAM" id="SSF52016">
    <property type="entry name" value="LeuD/IlvD-like"/>
    <property type="match status" value="1"/>
</dbReference>
<keyword id="KW-0028">Amino-acid biosynthesis</keyword>
<keyword id="KW-0100">Branched-chain amino acid biosynthesis</keyword>
<keyword id="KW-0432">Leucine biosynthesis</keyword>
<keyword id="KW-0456">Lyase</keyword>
<sequence>MAEKFIKHTGLVVPLDAANVDTDAIIPKQFLQKVTRTGFGAHLFNDWRFLDEKGQQPNPDFVLNFPQYQGASILLARENFGCGSSREHAPWALTDYGFKVVIAPSFADIFYGNSFNNQLLPVKLSDAEVDELFALVKANPGIHFDVDLEAQEVKAGEKTYHFTIDAFRRHCMMNGLDSIGLTLQHDDAIAAYEAKQPAFMN</sequence>
<feature type="chain" id="PRO_1000063756" description="3-isopropylmalate dehydratase small subunit">
    <location>
        <begin position="1"/>
        <end position="201"/>
    </location>
</feature>
<comment type="function">
    <text evidence="1">Catalyzes the isomerization between 2-isopropylmalate and 3-isopropylmalate, via the formation of 2-isopropylmaleate.</text>
</comment>
<comment type="catalytic activity">
    <reaction evidence="1">
        <text>(2R,3S)-3-isopropylmalate = (2S)-2-isopropylmalate</text>
        <dbReference type="Rhea" id="RHEA:32287"/>
        <dbReference type="ChEBI" id="CHEBI:1178"/>
        <dbReference type="ChEBI" id="CHEBI:35121"/>
        <dbReference type="EC" id="4.2.1.33"/>
    </reaction>
</comment>
<comment type="pathway">
    <text evidence="1">Amino-acid biosynthesis; L-leucine biosynthesis; L-leucine from 3-methyl-2-oxobutanoate: step 2/4.</text>
</comment>
<comment type="subunit">
    <text evidence="1">Heterodimer of LeuC and LeuD.</text>
</comment>
<comment type="similarity">
    <text evidence="1">Belongs to the LeuD family. LeuD type 1 subfamily.</text>
</comment>
<gene>
    <name evidence="1" type="primary">leuD</name>
    <name type="ordered locus">EcHS_A0076</name>
</gene>
<evidence type="ECO:0000255" key="1">
    <source>
        <dbReference type="HAMAP-Rule" id="MF_01031"/>
    </source>
</evidence>